<name>YHBP_SALNS</name>
<sequence length="147" mass="16688">MDTLTAIGRWLAKQHVVTWCVHHEGELWCANAFYLFDAQNVALYLLTDDKTRHAQMSGACAPVAGTVNGQPKTVARIRGVQFKGEIRRLEGQESDAARKAYLRRFPVARVLPAPVWEIRLDEIKFTDNTLGFGKKLHWLRDSRAQQA</sequence>
<reference key="1">
    <citation type="journal article" date="2011" name="J. Bacteriol.">
        <title>Comparative genomics of 28 Salmonella enterica isolates: evidence for CRISPR-mediated adaptive sublineage evolution.</title>
        <authorList>
            <person name="Fricke W.F."/>
            <person name="Mammel M.K."/>
            <person name="McDermott P.F."/>
            <person name="Tartera C."/>
            <person name="White D.G."/>
            <person name="Leclerc J.E."/>
            <person name="Ravel J."/>
            <person name="Cebula T.A."/>
        </authorList>
    </citation>
    <scope>NUCLEOTIDE SEQUENCE [LARGE SCALE GENOMIC DNA]</scope>
    <source>
        <strain>SL254</strain>
    </source>
</reference>
<evidence type="ECO:0000255" key="1">
    <source>
        <dbReference type="HAMAP-Rule" id="MF_00764"/>
    </source>
</evidence>
<proteinExistence type="inferred from homology"/>
<accession>B4T6Y5</accession>
<protein>
    <recommendedName>
        <fullName evidence="1">UPF0306 protein YhbP</fullName>
    </recommendedName>
</protein>
<feature type="chain" id="PRO_1000198366" description="UPF0306 protein YhbP">
    <location>
        <begin position="1"/>
        <end position="147"/>
    </location>
</feature>
<organism>
    <name type="scientific">Salmonella newport (strain SL254)</name>
    <dbReference type="NCBI Taxonomy" id="423368"/>
    <lineage>
        <taxon>Bacteria</taxon>
        <taxon>Pseudomonadati</taxon>
        <taxon>Pseudomonadota</taxon>
        <taxon>Gammaproteobacteria</taxon>
        <taxon>Enterobacterales</taxon>
        <taxon>Enterobacteriaceae</taxon>
        <taxon>Salmonella</taxon>
    </lineage>
</organism>
<dbReference type="EMBL" id="CP001113">
    <property type="protein sequence ID" value="ACF62868.1"/>
    <property type="molecule type" value="Genomic_DNA"/>
</dbReference>
<dbReference type="RefSeq" id="WP_000380404.1">
    <property type="nucleotide sequence ID" value="NZ_CCMR01000001.1"/>
</dbReference>
<dbReference type="SMR" id="B4T6Y5"/>
<dbReference type="KEGG" id="see:SNSL254_A3529"/>
<dbReference type="HOGENOM" id="CLU_105087_3_0_6"/>
<dbReference type="Proteomes" id="UP000008824">
    <property type="component" value="Chromosome"/>
</dbReference>
<dbReference type="Gene3D" id="2.30.110.10">
    <property type="entry name" value="Electron Transport, Fmn-binding Protein, Chain A"/>
    <property type="match status" value="1"/>
</dbReference>
<dbReference type="HAMAP" id="MF_00764">
    <property type="entry name" value="UPF0306"/>
    <property type="match status" value="1"/>
</dbReference>
<dbReference type="InterPro" id="IPR012349">
    <property type="entry name" value="Split_barrel_FMN-bd"/>
</dbReference>
<dbReference type="InterPro" id="IPR011194">
    <property type="entry name" value="UPF0306"/>
</dbReference>
<dbReference type="NCBIfam" id="NF002900">
    <property type="entry name" value="PRK03467.1"/>
    <property type="match status" value="1"/>
</dbReference>
<dbReference type="PIRSF" id="PIRSF009554">
    <property type="entry name" value="UCP009554"/>
    <property type="match status" value="1"/>
</dbReference>
<dbReference type="SUPFAM" id="SSF50475">
    <property type="entry name" value="FMN-binding split barrel"/>
    <property type="match status" value="1"/>
</dbReference>
<comment type="similarity">
    <text evidence="1">Belongs to the UPF0306 family.</text>
</comment>
<gene>
    <name evidence="1" type="primary">yhbP</name>
    <name type="ordered locus">SNSL254_A3529</name>
</gene>